<proteinExistence type="inferred from homology"/>
<sequence>MPDPRDDDEAATAMPERAFFGRRKGHKLRSHQADLIAELLPRLSFDLGAPAPARLETLFASGIAEVRLEIGFGGGEHLIAEALAHPTTGFIGCEPYVNGMAKILAQIEARELGNIRLFAGDAAELLAWAPPASLARVDLIHPDPWPKRRHWKRRFVQDTSVAAMARVLHEDGEFRFVSDIDDYCAWTLAHLLRSKEFCWTAERACDWQLPFAGYTMTRYGRKAEREGRRAAYLHFRRAAAAPNDRAKAGEL</sequence>
<name>TRMB_RHOPB</name>
<keyword id="KW-0489">Methyltransferase</keyword>
<keyword id="KW-0949">S-adenosyl-L-methionine</keyword>
<keyword id="KW-0808">Transferase</keyword>
<keyword id="KW-0819">tRNA processing</keyword>
<protein>
    <recommendedName>
        <fullName evidence="2">tRNA (guanine-N(7)-)-methyltransferase</fullName>
        <ecNumber evidence="2">2.1.1.33</ecNumber>
    </recommendedName>
    <alternativeName>
        <fullName evidence="2">tRNA (guanine(46)-N(7))-methyltransferase</fullName>
    </alternativeName>
    <alternativeName>
        <fullName evidence="2">tRNA(m7G46)-methyltransferase</fullName>
    </alternativeName>
</protein>
<comment type="function">
    <text evidence="2">Catalyzes the formation of N(7)-methylguanine at position 46 (m7G46) in tRNA.</text>
</comment>
<comment type="catalytic activity">
    <reaction evidence="2">
        <text>guanosine(46) in tRNA + S-adenosyl-L-methionine = N(7)-methylguanosine(46) in tRNA + S-adenosyl-L-homocysteine</text>
        <dbReference type="Rhea" id="RHEA:42708"/>
        <dbReference type="Rhea" id="RHEA-COMP:10188"/>
        <dbReference type="Rhea" id="RHEA-COMP:10189"/>
        <dbReference type="ChEBI" id="CHEBI:57856"/>
        <dbReference type="ChEBI" id="CHEBI:59789"/>
        <dbReference type="ChEBI" id="CHEBI:74269"/>
        <dbReference type="ChEBI" id="CHEBI:74480"/>
        <dbReference type="EC" id="2.1.1.33"/>
    </reaction>
</comment>
<comment type="pathway">
    <text evidence="2">tRNA modification; N(7)-methylguanine-tRNA biosynthesis.</text>
</comment>
<comment type="similarity">
    <text evidence="2">Belongs to the class I-like SAM-binding methyltransferase superfamily. TrmB family.</text>
</comment>
<dbReference type="EC" id="2.1.1.33" evidence="2"/>
<dbReference type="EMBL" id="CP000301">
    <property type="protein sequence ID" value="ABD86049.1"/>
    <property type="molecule type" value="Genomic_DNA"/>
</dbReference>
<dbReference type="SMR" id="Q21C37"/>
<dbReference type="STRING" id="316056.RPC_0474"/>
<dbReference type="KEGG" id="rpc:RPC_0474"/>
<dbReference type="eggNOG" id="COG0220">
    <property type="taxonomic scope" value="Bacteria"/>
</dbReference>
<dbReference type="HOGENOM" id="CLU_050910_0_3_5"/>
<dbReference type="OrthoDB" id="9802090at2"/>
<dbReference type="UniPathway" id="UPA00989"/>
<dbReference type="GO" id="GO:0043527">
    <property type="term" value="C:tRNA methyltransferase complex"/>
    <property type="evidence" value="ECO:0007669"/>
    <property type="project" value="TreeGrafter"/>
</dbReference>
<dbReference type="GO" id="GO:0008176">
    <property type="term" value="F:tRNA (guanine(46)-N7)-methyltransferase activity"/>
    <property type="evidence" value="ECO:0007669"/>
    <property type="project" value="UniProtKB-UniRule"/>
</dbReference>
<dbReference type="Gene3D" id="3.40.50.150">
    <property type="entry name" value="Vaccinia Virus protein VP39"/>
    <property type="match status" value="1"/>
</dbReference>
<dbReference type="HAMAP" id="MF_01057">
    <property type="entry name" value="tRNA_methyltr_TrmB"/>
    <property type="match status" value="1"/>
</dbReference>
<dbReference type="InterPro" id="IPR029063">
    <property type="entry name" value="SAM-dependent_MTases_sf"/>
</dbReference>
<dbReference type="InterPro" id="IPR003358">
    <property type="entry name" value="tRNA_(Gua-N-7)_MeTrfase_Trmb"/>
</dbReference>
<dbReference type="InterPro" id="IPR055361">
    <property type="entry name" value="tRNA_methyltr_TrmB_bact"/>
</dbReference>
<dbReference type="NCBIfam" id="TIGR00091">
    <property type="entry name" value="tRNA (guanosine(46)-N7)-methyltransferase TrmB"/>
    <property type="match status" value="1"/>
</dbReference>
<dbReference type="PANTHER" id="PTHR23417">
    <property type="entry name" value="3-DEOXY-D-MANNO-OCTULOSONIC-ACID TRANSFERASE/TRNA GUANINE-N 7 - -METHYLTRANSFERASE"/>
    <property type="match status" value="1"/>
</dbReference>
<dbReference type="PANTHER" id="PTHR23417:SF14">
    <property type="entry name" value="PENTACOTRIPEPTIDE-REPEAT REGION OF PRORP DOMAIN-CONTAINING PROTEIN"/>
    <property type="match status" value="1"/>
</dbReference>
<dbReference type="Pfam" id="PF02390">
    <property type="entry name" value="Methyltransf_4"/>
    <property type="match status" value="1"/>
</dbReference>
<dbReference type="SUPFAM" id="SSF53335">
    <property type="entry name" value="S-adenosyl-L-methionine-dependent methyltransferases"/>
    <property type="match status" value="1"/>
</dbReference>
<dbReference type="PROSITE" id="PS51625">
    <property type="entry name" value="SAM_MT_TRMB"/>
    <property type="match status" value="1"/>
</dbReference>
<gene>
    <name evidence="2" type="primary">trmB</name>
    <name type="ordered locus">RPC_0474</name>
</gene>
<feature type="chain" id="PRO_0000288214" description="tRNA (guanine-N(7)-)-methyltransferase">
    <location>
        <begin position="1"/>
        <end position="251"/>
    </location>
</feature>
<feature type="active site" evidence="1">
    <location>
        <position position="143"/>
    </location>
</feature>
<feature type="binding site" evidence="2">
    <location>
        <position position="69"/>
    </location>
    <ligand>
        <name>S-adenosyl-L-methionine</name>
        <dbReference type="ChEBI" id="CHEBI:59789"/>
    </ligand>
</feature>
<feature type="binding site" evidence="2">
    <location>
        <position position="94"/>
    </location>
    <ligand>
        <name>S-adenosyl-L-methionine</name>
        <dbReference type="ChEBI" id="CHEBI:59789"/>
    </ligand>
</feature>
<feature type="binding site" evidence="2">
    <location>
        <position position="121"/>
    </location>
    <ligand>
        <name>S-adenosyl-L-methionine</name>
        <dbReference type="ChEBI" id="CHEBI:59789"/>
    </ligand>
</feature>
<feature type="binding site" evidence="2">
    <location>
        <position position="143"/>
    </location>
    <ligand>
        <name>S-adenosyl-L-methionine</name>
        <dbReference type="ChEBI" id="CHEBI:59789"/>
    </ligand>
</feature>
<feature type="binding site" evidence="2">
    <location>
        <position position="147"/>
    </location>
    <ligand>
        <name>substrate</name>
    </ligand>
</feature>
<feature type="binding site" evidence="2">
    <location>
        <position position="179"/>
    </location>
    <ligand>
        <name>substrate</name>
    </ligand>
</feature>
<accession>Q21C37</accession>
<reference key="1">
    <citation type="submission" date="2006-03" db="EMBL/GenBank/DDBJ databases">
        <title>Complete sequence of Rhodopseudomonas palustris BisB18.</title>
        <authorList>
            <consortium name="US DOE Joint Genome Institute"/>
            <person name="Copeland A."/>
            <person name="Lucas S."/>
            <person name="Lapidus A."/>
            <person name="Barry K."/>
            <person name="Detter J.C."/>
            <person name="Glavina del Rio T."/>
            <person name="Hammon N."/>
            <person name="Israni S."/>
            <person name="Dalin E."/>
            <person name="Tice H."/>
            <person name="Pitluck S."/>
            <person name="Chain P."/>
            <person name="Malfatti S."/>
            <person name="Shin M."/>
            <person name="Vergez L."/>
            <person name="Schmutz J."/>
            <person name="Larimer F."/>
            <person name="Land M."/>
            <person name="Hauser L."/>
            <person name="Pelletier D.A."/>
            <person name="Kyrpides N."/>
            <person name="Anderson I."/>
            <person name="Oda Y."/>
            <person name="Harwood C.S."/>
            <person name="Richardson P."/>
        </authorList>
    </citation>
    <scope>NUCLEOTIDE SEQUENCE [LARGE SCALE GENOMIC DNA]</scope>
    <source>
        <strain>BisB18</strain>
    </source>
</reference>
<organism>
    <name type="scientific">Rhodopseudomonas palustris (strain BisB18)</name>
    <dbReference type="NCBI Taxonomy" id="316056"/>
    <lineage>
        <taxon>Bacteria</taxon>
        <taxon>Pseudomonadati</taxon>
        <taxon>Pseudomonadota</taxon>
        <taxon>Alphaproteobacteria</taxon>
        <taxon>Hyphomicrobiales</taxon>
        <taxon>Nitrobacteraceae</taxon>
        <taxon>Rhodopseudomonas</taxon>
    </lineage>
</organism>
<evidence type="ECO:0000250" key="1"/>
<evidence type="ECO:0000255" key="2">
    <source>
        <dbReference type="HAMAP-Rule" id="MF_01057"/>
    </source>
</evidence>